<keyword id="KW-0880">Kelch repeat</keyword>
<keyword id="KW-1185">Reference proteome</keyword>
<keyword id="KW-0677">Repeat</keyword>
<feature type="chain" id="PRO_0000274962" description="F-box/kelch-repeat protein At4g19870">
    <location>
        <begin position="1"/>
        <end position="400"/>
    </location>
</feature>
<feature type="domain" description="F-box" evidence="1">
    <location>
        <begin position="27"/>
        <end position="73"/>
    </location>
</feature>
<feature type="repeat" description="Kelch 1">
    <location>
        <begin position="146"/>
        <end position="192"/>
    </location>
</feature>
<feature type="repeat" description="Kelch 2">
    <location>
        <begin position="194"/>
        <end position="240"/>
    </location>
</feature>
<feature type="repeat" description="Kelch 3">
    <location>
        <begin position="242"/>
        <end position="284"/>
    </location>
</feature>
<feature type="region of interest" description="Disordered" evidence="2">
    <location>
        <begin position="1"/>
        <end position="33"/>
    </location>
</feature>
<feature type="compositionally biased region" description="Basic and acidic residues" evidence="2">
    <location>
        <begin position="1"/>
        <end position="10"/>
    </location>
</feature>
<feature type="compositionally biased region" description="Low complexity" evidence="2">
    <location>
        <begin position="19"/>
        <end position="33"/>
    </location>
</feature>
<proteinExistence type="evidence at transcript level"/>
<gene>
    <name type="ordered locus">At4g19870</name>
    <name type="ORF">T16H5.230</name>
</gene>
<evidence type="ECO:0000255" key="1">
    <source>
        <dbReference type="PROSITE-ProRule" id="PRU00080"/>
    </source>
</evidence>
<evidence type="ECO:0000256" key="2">
    <source>
        <dbReference type="SAM" id="MobiDB-lite"/>
    </source>
</evidence>
<evidence type="ECO:0000305" key="3"/>
<name>FBK85_ARATH</name>
<organism>
    <name type="scientific">Arabidopsis thaliana</name>
    <name type="common">Mouse-ear cress</name>
    <dbReference type="NCBI Taxonomy" id="3702"/>
    <lineage>
        <taxon>Eukaryota</taxon>
        <taxon>Viridiplantae</taxon>
        <taxon>Streptophyta</taxon>
        <taxon>Embryophyta</taxon>
        <taxon>Tracheophyta</taxon>
        <taxon>Spermatophyta</taxon>
        <taxon>Magnoliopsida</taxon>
        <taxon>eudicotyledons</taxon>
        <taxon>Gunneridae</taxon>
        <taxon>Pentapetalae</taxon>
        <taxon>rosids</taxon>
        <taxon>malvids</taxon>
        <taxon>Brassicales</taxon>
        <taxon>Brassicaceae</taxon>
        <taxon>Camelineae</taxon>
        <taxon>Arabidopsis</taxon>
    </lineage>
</organism>
<reference key="1">
    <citation type="journal article" date="1999" name="Nature">
        <title>Sequence and analysis of chromosome 4 of the plant Arabidopsis thaliana.</title>
        <authorList>
            <person name="Mayer K.F.X."/>
            <person name="Schueller C."/>
            <person name="Wambutt R."/>
            <person name="Murphy G."/>
            <person name="Volckaert G."/>
            <person name="Pohl T."/>
            <person name="Duesterhoeft A."/>
            <person name="Stiekema W."/>
            <person name="Entian K.-D."/>
            <person name="Terryn N."/>
            <person name="Harris B."/>
            <person name="Ansorge W."/>
            <person name="Brandt P."/>
            <person name="Grivell L.A."/>
            <person name="Rieger M."/>
            <person name="Weichselgartner M."/>
            <person name="de Simone V."/>
            <person name="Obermaier B."/>
            <person name="Mache R."/>
            <person name="Mueller M."/>
            <person name="Kreis M."/>
            <person name="Delseny M."/>
            <person name="Puigdomenech P."/>
            <person name="Watson M."/>
            <person name="Schmidtheini T."/>
            <person name="Reichert B."/>
            <person name="Portetelle D."/>
            <person name="Perez-Alonso M."/>
            <person name="Boutry M."/>
            <person name="Bancroft I."/>
            <person name="Vos P."/>
            <person name="Hoheisel J."/>
            <person name="Zimmermann W."/>
            <person name="Wedler H."/>
            <person name="Ridley P."/>
            <person name="Langham S.-A."/>
            <person name="McCullagh B."/>
            <person name="Bilham L."/>
            <person name="Robben J."/>
            <person name="van der Schueren J."/>
            <person name="Grymonprez B."/>
            <person name="Chuang Y.-J."/>
            <person name="Vandenbussche F."/>
            <person name="Braeken M."/>
            <person name="Weltjens I."/>
            <person name="Voet M."/>
            <person name="Bastiaens I."/>
            <person name="Aert R."/>
            <person name="Defoor E."/>
            <person name="Weitzenegger T."/>
            <person name="Bothe G."/>
            <person name="Ramsperger U."/>
            <person name="Hilbert H."/>
            <person name="Braun M."/>
            <person name="Holzer E."/>
            <person name="Brandt A."/>
            <person name="Peters S."/>
            <person name="van Staveren M."/>
            <person name="Dirkse W."/>
            <person name="Mooijman P."/>
            <person name="Klein Lankhorst R."/>
            <person name="Rose M."/>
            <person name="Hauf J."/>
            <person name="Koetter P."/>
            <person name="Berneiser S."/>
            <person name="Hempel S."/>
            <person name="Feldpausch M."/>
            <person name="Lamberth S."/>
            <person name="Van den Daele H."/>
            <person name="De Keyser A."/>
            <person name="Buysshaert C."/>
            <person name="Gielen J."/>
            <person name="Villarroel R."/>
            <person name="De Clercq R."/>
            <person name="van Montagu M."/>
            <person name="Rogers J."/>
            <person name="Cronin A."/>
            <person name="Quail M.A."/>
            <person name="Bray-Allen S."/>
            <person name="Clark L."/>
            <person name="Doggett J."/>
            <person name="Hall S."/>
            <person name="Kay M."/>
            <person name="Lennard N."/>
            <person name="McLay K."/>
            <person name="Mayes R."/>
            <person name="Pettett A."/>
            <person name="Rajandream M.A."/>
            <person name="Lyne M."/>
            <person name="Benes V."/>
            <person name="Rechmann S."/>
            <person name="Borkova D."/>
            <person name="Bloecker H."/>
            <person name="Scharfe M."/>
            <person name="Grimm M."/>
            <person name="Loehnert T.-H."/>
            <person name="Dose S."/>
            <person name="de Haan M."/>
            <person name="Maarse A.C."/>
            <person name="Schaefer M."/>
            <person name="Mueller-Auer S."/>
            <person name="Gabel C."/>
            <person name="Fuchs M."/>
            <person name="Fartmann B."/>
            <person name="Granderath K."/>
            <person name="Dauner D."/>
            <person name="Herzl A."/>
            <person name="Neumann S."/>
            <person name="Argiriou A."/>
            <person name="Vitale D."/>
            <person name="Liguori R."/>
            <person name="Piravandi E."/>
            <person name="Massenet O."/>
            <person name="Quigley F."/>
            <person name="Clabauld G."/>
            <person name="Muendlein A."/>
            <person name="Felber R."/>
            <person name="Schnabl S."/>
            <person name="Hiller R."/>
            <person name="Schmidt W."/>
            <person name="Lecharny A."/>
            <person name="Aubourg S."/>
            <person name="Chefdor F."/>
            <person name="Cooke R."/>
            <person name="Berger C."/>
            <person name="Monfort A."/>
            <person name="Casacuberta E."/>
            <person name="Gibbons T."/>
            <person name="Weber N."/>
            <person name="Vandenbol M."/>
            <person name="Bargues M."/>
            <person name="Terol J."/>
            <person name="Torres A."/>
            <person name="Perez-Perez A."/>
            <person name="Purnelle B."/>
            <person name="Bent E."/>
            <person name="Johnson S."/>
            <person name="Tacon D."/>
            <person name="Jesse T."/>
            <person name="Heijnen L."/>
            <person name="Schwarz S."/>
            <person name="Scholler P."/>
            <person name="Heber S."/>
            <person name="Francs P."/>
            <person name="Bielke C."/>
            <person name="Frishman D."/>
            <person name="Haase D."/>
            <person name="Lemcke K."/>
            <person name="Mewes H.-W."/>
            <person name="Stocker S."/>
            <person name="Zaccaria P."/>
            <person name="Bevan M."/>
            <person name="Wilson R.K."/>
            <person name="de la Bastide M."/>
            <person name="Habermann K."/>
            <person name="Parnell L."/>
            <person name="Dedhia N."/>
            <person name="Gnoj L."/>
            <person name="Schutz K."/>
            <person name="Huang E."/>
            <person name="Spiegel L."/>
            <person name="Sekhon M."/>
            <person name="Murray J."/>
            <person name="Sheet P."/>
            <person name="Cordes M."/>
            <person name="Abu-Threideh J."/>
            <person name="Stoneking T."/>
            <person name="Kalicki J."/>
            <person name="Graves T."/>
            <person name="Harmon G."/>
            <person name="Edwards J."/>
            <person name="Latreille P."/>
            <person name="Courtney L."/>
            <person name="Cloud J."/>
            <person name="Abbott A."/>
            <person name="Scott K."/>
            <person name="Johnson D."/>
            <person name="Minx P."/>
            <person name="Bentley D."/>
            <person name="Fulton B."/>
            <person name="Miller N."/>
            <person name="Greco T."/>
            <person name="Kemp K."/>
            <person name="Kramer J."/>
            <person name="Fulton L."/>
            <person name="Mardis E."/>
            <person name="Dante M."/>
            <person name="Pepin K."/>
            <person name="Hillier L.W."/>
            <person name="Nelson J."/>
            <person name="Spieth J."/>
            <person name="Ryan E."/>
            <person name="Andrews S."/>
            <person name="Geisel C."/>
            <person name="Layman D."/>
            <person name="Du H."/>
            <person name="Ali J."/>
            <person name="Berghoff A."/>
            <person name="Jones K."/>
            <person name="Drone K."/>
            <person name="Cotton M."/>
            <person name="Joshu C."/>
            <person name="Antonoiu B."/>
            <person name="Zidanic M."/>
            <person name="Strong C."/>
            <person name="Sun H."/>
            <person name="Lamar B."/>
            <person name="Yordan C."/>
            <person name="Ma P."/>
            <person name="Zhong J."/>
            <person name="Preston R."/>
            <person name="Vil D."/>
            <person name="Shekher M."/>
            <person name="Matero A."/>
            <person name="Shah R."/>
            <person name="Swaby I.K."/>
            <person name="O'Shaughnessy A."/>
            <person name="Rodriguez M."/>
            <person name="Hoffman J."/>
            <person name="Till S."/>
            <person name="Granat S."/>
            <person name="Shohdy N."/>
            <person name="Hasegawa A."/>
            <person name="Hameed A."/>
            <person name="Lodhi M."/>
            <person name="Johnson A."/>
            <person name="Chen E."/>
            <person name="Marra M.A."/>
            <person name="Martienssen R."/>
            <person name="McCombie W.R."/>
        </authorList>
    </citation>
    <scope>NUCLEOTIDE SEQUENCE [LARGE SCALE GENOMIC DNA]</scope>
    <source>
        <strain>cv. Columbia</strain>
    </source>
</reference>
<reference key="2">
    <citation type="journal article" date="2017" name="Plant J.">
        <title>Araport11: a complete reannotation of the Arabidopsis thaliana reference genome.</title>
        <authorList>
            <person name="Cheng C.Y."/>
            <person name="Krishnakumar V."/>
            <person name="Chan A.P."/>
            <person name="Thibaud-Nissen F."/>
            <person name="Schobel S."/>
            <person name="Town C.D."/>
        </authorList>
    </citation>
    <scope>GENOME REANNOTATION</scope>
    <source>
        <strain>cv. Columbia</strain>
    </source>
</reference>
<reference key="3">
    <citation type="journal article" date="2002" name="Science">
        <title>Functional annotation of a full-length Arabidopsis cDNA collection.</title>
        <authorList>
            <person name="Seki M."/>
            <person name="Narusaka M."/>
            <person name="Kamiya A."/>
            <person name="Ishida J."/>
            <person name="Satou M."/>
            <person name="Sakurai T."/>
            <person name="Nakajima M."/>
            <person name="Enju A."/>
            <person name="Akiyama K."/>
            <person name="Oono Y."/>
            <person name="Muramatsu M."/>
            <person name="Hayashizaki Y."/>
            <person name="Kawai J."/>
            <person name="Carninci P."/>
            <person name="Itoh M."/>
            <person name="Ishii Y."/>
            <person name="Arakawa T."/>
            <person name="Shibata K."/>
            <person name="Shinagawa A."/>
            <person name="Shinozaki K."/>
        </authorList>
    </citation>
    <scope>NUCLEOTIDE SEQUENCE [LARGE SCALE MRNA]</scope>
    <source>
        <strain>cv. Columbia</strain>
    </source>
</reference>
<protein>
    <recommendedName>
        <fullName>F-box/kelch-repeat protein At4g19870</fullName>
    </recommendedName>
</protein>
<dbReference type="EMBL" id="AL024486">
    <property type="protein sequence ID" value="CAA19704.1"/>
    <property type="status" value="ALT_SEQ"/>
    <property type="molecule type" value="Genomic_DNA"/>
</dbReference>
<dbReference type="EMBL" id="AL161551">
    <property type="protein sequence ID" value="CAB78989.1"/>
    <property type="status" value="ALT_SEQ"/>
    <property type="molecule type" value="Genomic_DNA"/>
</dbReference>
<dbReference type="EMBL" id="CP002687">
    <property type="protein sequence ID" value="AEE84237.1"/>
    <property type="molecule type" value="Genomic_DNA"/>
</dbReference>
<dbReference type="EMBL" id="CP002687">
    <property type="protein sequence ID" value="AEE84238.1"/>
    <property type="molecule type" value="Genomic_DNA"/>
</dbReference>
<dbReference type="EMBL" id="AK118264">
    <property type="protein sequence ID" value="BAC42882.1"/>
    <property type="molecule type" value="mRNA"/>
</dbReference>
<dbReference type="PIR" id="T04768">
    <property type="entry name" value="T04768"/>
</dbReference>
<dbReference type="RefSeq" id="NP_193722.2">
    <property type="nucleotide sequence ID" value="NM_118107.4"/>
</dbReference>
<dbReference type="RefSeq" id="NP_849547.1">
    <property type="nucleotide sequence ID" value="NM_179216.2"/>
</dbReference>
<dbReference type="SMR" id="Q8GXF6"/>
<dbReference type="FunCoup" id="Q8GXF6">
    <property type="interactions" value="4"/>
</dbReference>
<dbReference type="GlyGen" id="Q8GXF6">
    <property type="glycosylation" value="1 site"/>
</dbReference>
<dbReference type="PaxDb" id="3702-AT4G19870.2"/>
<dbReference type="ProteomicsDB" id="230911"/>
<dbReference type="EnsemblPlants" id="AT4G19870.1">
    <property type="protein sequence ID" value="AT4G19870.1"/>
    <property type="gene ID" value="AT4G19870"/>
</dbReference>
<dbReference type="EnsemblPlants" id="AT4G19870.2">
    <property type="protein sequence ID" value="AT4G19870.2"/>
    <property type="gene ID" value="AT4G19870"/>
</dbReference>
<dbReference type="GeneID" id="827733"/>
<dbReference type="Gramene" id="AT4G19870.1">
    <property type="protein sequence ID" value="AT4G19870.1"/>
    <property type="gene ID" value="AT4G19870"/>
</dbReference>
<dbReference type="Gramene" id="AT4G19870.2">
    <property type="protein sequence ID" value="AT4G19870.2"/>
    <property type="gene ID" value="AT4G19870"/>
</dbReference>
<dbReference type="KEGG" id="ath:AT4G19870"/>
<dbReference type="Araport" id="AT4G19870"/>
<dbReference type="TAIR" id="AT4G19870"/>
<dbReference type="eggNOG" id="KOG1072">
    <property type="taxonomic scope" value="Eukaryota"/>
</dbReference>
<dbReference type="HOGENOM" id="CLU_032521_1_2_1"/>
<dbReference type="InParanoid" id="Q8GXF6"/>
<dbReference type="OMA" id="DSLTCFY"/>
<dbReference type="PhylomeDB" id="Q8GXF6"/>
<dbReference type="PRO" id="PR:Q8GXF6"/>
<dbReference type="Proteomes" id="UP000006548">
    <property type="component" value="Chromosome 4"/>
</dbReference>
<dbReference type="ExpressionAtlas" id="Q8GXF6">
    <property type="expression patterns" value="baseline and differential"/>
</dbReference>
<dbReference type="CDD" id="cd22152">
    <property type="entry name" value="F-box_AtAFR-like"/>
    <property type="match status" value="1"/>
</dbReference>
<dbReference type="Gene3D" id="2.120.10.80">
    <property type="entry name" value="Kelch-type beta propeller"/>
    <property type="match status" value="1"/>
</dbReference>
<dbReference type="InterPro" id="IPR036047">
    <property type="entry name" value="F-box-like_dom_sf"/>
</dbReference>
<dbReference type="InterPro" id="IPR050354">
    <property type="entry name" value="F-box/kelch-repeat_ARATH"/>
</dbReference>
<dbReference type="InterPro" id="IPR001810">
    <property type="entry name" value="F-box_dom"/>
</dbReference>
<dbReference type="InterPro" id="IPR015915">
    <property type="entry name" value="Kelch-typ_b-propeller"/>
</dbReference>
<dbReference type="InterPro" id="IPR006652">
    <property type="entry name" value="Kelch_1"/>
</dbReference>
<dbReference type="PANTHER" id="PTHR24414:SF91">
    <property type="entry name" value="(RAPE) HYPOTHETICAL PROTEIN"/>
    <property type="match status" value="1"/>
</dbReference>
<dbReference type="PANTHER" id="PTHR24414">
    <property type="entry name" value="F-BOX/KELCH-REPEAT PROTEIN SKIP4"/>
    <property type="match status" value="1"/>
</dbReference>
<dbReference type="Pfam" id="PF00646">
    <property type="entry name" value="F-box"/>
    <property type="match status" value="1"/>
</dbReference>
<dbReference type="Pfam" id="PF25210">
    <property type="entry name" value="Kelch_FKB95"/>
    <property type="match status" value="1"/>
</dbReference>
<dbReference type="SMART" id="SM00256">
    <property type="entry name" value="FBOX"/>
    <property type="match status" value="1"/>
</dbReference>
<dbReference type="SMART" id="SM00612">
    <property type="entry name" value="Kelch"/>
    <property type="match status" value="2"/>
</dbReference>
<dbReference type="SUPFAM" id="SSF81383">
    <property type="entry name" value="F-box domain"/>
    <property type="match status" value="1"/>
</dbReference>
<dbReference type="SUPFAM" id="SSF117281">
    <property type="entry name" value="Kelch motif"/>
    <property type="match status" value="1"/>
</dbReference>
<dbReference type="PROSITE" id="PS50181">
    <property type="entry name" value="FBOX"/>
    <property type="match status" value="1"/>
</dbReference>
<comment type="sequence caution" evidence="3">
    <conflict type="erroneous gene model prediction">
        <sequence resource="EMBL-CDS" id="CAA19704"/>
    </conflict>
    <text>The predicted gene At4g19870 has been split into 2 genes: At4g19865 and At4g19870.</text>
</comment>
<comment type="sequence caution" evidence="3">
    <conflict type="erroneous gene model prediction">
        <sequence resource="EMBL-CDS" id="CAB78989"/>
    </conflict>
    <text>The predicted gene At4g19870 has been split into 2 genes: At4g19865 and At4g19870.</text>
</comment>
<accession>Q8GXF6</accession>
<accession>O81868</accession>
<sequence length="400" mass="45081">MKRQAKPPEKKTKRTTNASSPTPSSSSPSLSSLPDEIVENCLARISRSYYPTLSIVSKSFRSIISSTELYVARSHLRNTEECVYVCLSDKSFEFPKWFTLWVNPNQANSMVEKKRKKKKTIGKLLVPIPSSNLSPVSKSAIAVGSEIYVIGGKVDGALSSAVRILDCRSNTWRDAPSMTVARKRPFICLYDGKIYVIGGYNKLSESEPWAEVFDIKTQTWECLSDPGTEIRNCTIYRIAEIEGKIHFGYTQKTYAYDPKQGEWECCEGEVAFPRSQCVMESVLYTFANNYTWEDDYGCKWWSTDGYGEKVKGLESLLEIHKRNGGSSDNTTKLVACGGKLLLLWEGYMKHNPNNRKKIWCAVIALEKRDGGKVWGIVEWVDVVHIVPTSCKLLHCLVVSV</sequence>